<name>RUVC_SODGM</name>
<evidence type="ECO:0000255" key="1">
    <source>
        <dbReference type="HAMAP-Rule" id="MF_00034"/>
    </source>
</evidence>
<reference key="1">
    <citation type="journal article" date="2006" name="Genome Res.">
        <title>Massive genome erosion and functional adaptations provide insights into the symbiotic lifestyle of Sodalis glossinidius in the tsetse host.</title>
        <authorList>
            <person name="Toh H."/>
            <person name="Weiss B.L."/>
            <person name="Perkin S.A.H."/>
            <person name="Yamashita A."/>
            <person name="Oshima K."/>
            <person name="Hattori M."/>
            <person name="Aksoy S."/>
        </authorList>
    </citation>
    <scope>NUCLEOTIDE SEQUENCE [LARGE SCALE GENOMIC DNA]</scope>
    <source>
        <strain>morsitans</strain>
    </source>
</reference>
<gene>
    <name evidence="1" type="primary">ruvC</name>
    <name type="ordered locus">SG1260</name>
</gene>
<keyword id="KW-0963">Cytoplasm</keyword>
<keyword id="KW-0227">DNA damage</keyword>
<keyword id="KW-0233">DNA recombination</keyword>
<keyword id="KW-0234">DNA repair</keyword>
<keyword id="KW-0238">DNA-binding</keyword>
<keyword id="KW-0255">Endonuclease</keyword>
<keyword id="KW-0378">Hydrolase</keyword>
<keyword id="KW-0460">Magnesium</keyword>
<keyword id="KW-0479">Metal-binding</keyword>
<keyword id="KW-0540">Nuclease</keyword>
<protein>
    <recommendedName>
        <fullName evidence="1">Crossover junction endodeoxyribonuclease RuvC</fullName>
        <ecNumber evidence="1">3.1.21.10</ecNumber>
    </recommendedName>
    <alternativeName>
        <fullName evidence="1">Holliday junction nuclease RuvC</fullName>
    </alternativeName>
    <alternativeName>
        <fullName evidence="1">Holliday junction resolvase RuvC</fullName>
    </alternativeName>
</protein>
<proteinExistence type="inferred from homology"/>
<dbReference type="EC" id="3.1.21.10" evidence="1"/>
<dbReference type="EMBL" id="AP008232">
    <property type="protein sequence ID" value="BAE74535.1"/>
    <property type="molecule type" value="Genomic_DNA"/>
</dbReference>
<dbReference type="RefSeq" id="WP_011411089.1">
    <property type="nucleotide sequence ID" value="NC_007712.1"/>
</dbReference>
<dbReference type="SMR" id="Q2NTJ0"/>
<dbReference type="STRING" id="343509.SG1260"/>
<dbReference type="KEGG" id="sgl:SG1260"/>
<dbReference type="eggNOG" id="COG0817">
    <property type="taxonomic scope" value="Bacteria"/>
</dbReference>
<dbReference type="HOGENOM" id="CLU_091257_2_1_6"/>
<dbReference type="OrthoDB" id="9805499at2"/>
<dbReference type="BioCyc" id="SGLO343509:SGP1_RS11220-MONOMER"/>
<dbReference type="Proteomes" id="UP000001932">
    <property type="component" value="Chromosome"/>
</dbReference>
<dbReference type="GO" id="GO:0005737">
    <property type="term" value="C:cytoplasm"/>
    <property type="evidence" value="ECO:0007669"/>
    <property type="project" value="UniProtKB-SubCell"/>
</dbReference>
<dbReference type="GO" id="GO:0048476">
    <property type="term" value="C:Holliday junction resolvase complex"/>
    <property type="evidence" value="ECO:0007669"/>
    <property type="project" value="UniProtKB-UniRule"/>
</dbReference>
<dbReference type="GO" id="GO:0008821">
    <property type="term" value="F:crossover junction DNA endonuclease activity"/>
    <property type="evidence" value="ECO:0007669"/>
    <property type="project" value="UniProtKB-UniRule"/>
</dbReference>
<dbReference type="GO" id="GO:0003677">
    <property type="term" value="F:DNA binding"/>
    <property type="evidence" value="ECO:0007669"/>
    <property type="project" value="UniProtKB-KW"/>
</dbReference>
<dbReference type="GO" id="GO:0000287">
    <property type="term" value="F:magnesium ion binding"/>
    <property type="evidence" value="ECO:0007669"/>
    <property type="project" value="UniProtKB-UniRule"/>
</dbReference>
<dbReference type="GO" id="GO:0006310">
    <property type="term" value="P:DNA recombination"/>
    <property type="evidence" value="ECO:0007669"/>
    <property type="project" value="UniProtKB-UniRule"/>
</dbReference>
<dbReference type="GO" id="GO:0006281">
    <property type="term" value="P:DNA repair"/>
    <property type="evidence" value="ECO:0007669"/>
    <property type="project" value="UniProtKB-UniRule"/>
</dbReference>
<dbReference type="CDD" id="cd16962">
    <property type="entry name" value="RuvC"/>
    <property type="match status" value="1"/>
</dbReference>
<dbReference type="FunFam" id="3.30.420.10:FF:000002">
    <property type="entry name" value="Crossover junction endodeoxyribonuclease RuvC"/>
    <property type="match status" value="1"/>
</dbReference>
<dbReference type="Gene3D" id="3.30.420.10">
    <property type="entry name" value="Ribonuclease H-like superfamily/Ribonuclease H"/>
    <property type="match status" value="1"/>
</dbReference>
<dbReference type="HAMAP" id="MF_00034">
    <property type="entry name" value="RuvC"/>
    <property type="match status" value="1"/>
</dbReference>
<dbReference type="InterPro" id="IPR012337">
    <property type="entry name" value="RNaseH-like_sf"/>
</dbReference>
<dbReference type="InterPro" id="IPR036397">
    <property type="entry name" value="RNaseH_sf"/>
</dbReference>
<dbReference type="InterPro" id="IPR020563">
    <property type="entry name" value="X-over_junc_endoDNase_Mg_BS"/>
</dbReference>
<dbReference type="InterPro" id="IPR002176">
    <property type="entry name" value="X-over_junc_endoDNase_RuvC"/>
</dbReference>
<dbReference type="NCBIfam" id="NF000711">
    <property type="entry name" value="PRK00039.2-1"/>
    <property type="match status" value="1"/>
</dbReference>
<dbReference type="NCBIfam" id="TIGR00228">
    <property type="entry name" value="ruvC"/>
    <property type="match status" value="1"/>
</dbReference>
<dbReference type="PANTHER" id="PTHR30194">
    <property type="entry name" value="CROSSOVER JUNCTION ENDODEOXYRIBONUCLEASE RUVC"/>
    <property type="match status" value="1"/>
</dbReference>
<dbReference type="PANTHER" id="PTHR30194:SF3">
    <property type="entry name" value="CROSSOVER JUNCTION ENDODEOXYRIBONUCLEASE RUVC"/>
    <property type="match status" value="1"/>
</dbReference>
<dbReference type="Pfam" id="PF02075">
    <property type="entry name" value="RuvC"/>
    <property type="match status" value="1"/>
</dbReference>
<dbReference type="PRINTS" id="PR00696">
    <property type="entry name" value="RSOLVASERUVC"/>
</dbReference>
<dbReference type="SUPFAM" id="SSF53098">
    <property type="entry name" value="Ribonuclease H-like"/>
    <property type="match status" value="1"/>
</dbReference>
<dbReference type="PROSITE" id="PS01321">
    <property type="entry name" value="RUVC"/>
    <property type="match status" value="1"/>
</dbReference>
<comment type="function">
    <text evidence="1">The RuvA-RuvB-RuvC complex processes Holliday junction (HJ) DNA during genetic recombination and DNA repair. Endonuclease that resolves HJ intermediates. Cleaves cruciform DNA by making single-stranded nicks across the HJ at symmetrical positions within the homologous arms, yielding a 5'-phosphate and a 3'-hydroxyl group; requires a central core of homology in the junction. The consensus cleavage sequence is 5'-(A/T)TT(C/G)-3'. Cleavage occurs on the 3'-side of the TT dinucleotide at the point of strand exchange. HJ branch migration catalyzed by RuvA-RuvB allows RuvC to scan DNA until it finds its consensus sequence, where it cleaves and resolves the cruciform DNA.</text>
</comment>
<comment type="catalytic activity">
    <reaction evidence="1">
        <text>Endonucleolytic cleavage at a junction such as a reciprocal single-stranded crossover between two homologous DNA duplexes (Holliday junction).</text>
        <dbReference type="EC" id="3.1.21.10"/>
    </reaction>
</comment>
<comment type="cofactor">
    <cofactor evidence="1">
        <name>Mg(2+)</name>
        <dbReference type="ChEBI" id="CHEBI:18420"/>
    </cofactor>
    <text evidence="1">Binds 2 Mg(2+) ion per subunit.</text>
</comment>
<comment type="subunit">
    <text evidence="1">Homodimer which binds Holliday junction (HJ) DNA. The HJ becomes 2-fold symmetrical on binding to RuvC with unstacked arms; it has a different conformation from HJ DNA in complex with RuvA. In the full resolvosome a probable DNA-RuvA(4)-RuvB(12)-RuvC(2) complex forms which resolves the HJ.</text>
</comment>
<comment type="subcellular location">
    <subcellularLocation>
        <location evidence="1">Cytoplasm</location>
    </subcellularLocation>
</comment>
<comment type="similarity">
    <text evidence="1">Belongs to the RuvC family.</text>
</comment>
<organism>
    <name type="scientific">Sodalis glossinidius (strain morsitans)</name>
    <dbReference type="NCBI Taxonomy" id="343509"/>
    <lineage>
        <taxon>Bacteria</taxon>
        <taxon>Pseudomonadati</taxon>
        <taxon>Pseudomonadota</taxon>
        <taxon>Gammaproteobacteria</taxon>
        <taxon>Enterobacterales</taxon>
        <taxon>Bruguierivoracaceae</taxon>
        <taxon>Sodalis</taxon>
    </lineage>
</organism>
<feature type="chain" id="PRO_1000002837" description="Crossover junction endodeoxyribonuclease RuvC">
    <location>
        <begin position="1"/>
        <end position="173"/>
    </location>
</feature>
<feature type="active site" evidence="1">
    <location>
        <position position="8"/>
    </location>
</feature>
<feature type="active site" evidence="1">
    <location>
        <position position="67"/>
    </location>
</feature>
<feature type="active site" evidence="1">
    <location>
        <position position="139"/>
    </location>
</feature>
<feature type="binding site" evidence="1">
    <location>
        <position position="8"/>
    </location>
    <ligand>
        <name>Mg(2+)</name>
        <dbReference type="ChEBI" id="CHEBI:18420"/>
        <label>1</label>
    </ligand>
</feature>
<feature type="binding site" evidence="1">
    <location>
        <position position="67"/>
    </location>
    <ligand>
        <name>Mg(2+)</name>
        <dbReference type="ChEBI" id="CHEBI:18420"/>
        <label>2</label>
    </ligand>
</feature>
<feature type="binding site" evidence="1">
    <location>
        <position position="139"/>
    </location>
    <ligand>
        <name>Mg(2+)</name>
        <dbReference type="ChEBI" id="CHEBI:18420"/>
        <label>1</label>
    </ligand>
</feature>
<sequence>MTVILGIDPGSRITGYGIVRQEGCKLTYLGSGCIRTKVDDLPARLKLIYAGVSEIITQFQPDCLAIEQVFMAKNADSALKLGQARGVAIVVAMNLDLPVFEYAARQVKQTVVGSGAAEKSQVQHMVRTLLKLPANPQADAADALAIAITHCHVSQNALRMGSGGLNLARGRLR</sequence>
<accession>Q2NTJ0</accession>